<protein>
    <recommendedName>
        <fullName evidence="1">Large ribosomal subunit protein bL19</fullName>
    </recommendedName>
    <alternativeName>
        <fullName evidence="2">50S ribosomal protein L19</fullName>
    </alternativeName>
</protein>
<dbReference type="EMBL" id="BA000039">
    <property type="protein sequence ID" value="BAC08855.1"/>
    <property type="molecule type" value="Genomic_DNA"/>
</dbReference>
<dbReference type="RefSeq" id="NP_682093.1">
    <property type="nucleotide sequence ID" value="NC_004113.1"/>
</dbReference>
<dbReference type="RefSeq" id="WP_011057143.1">
    <property type="nucleotide sequence ID" value="NC_004113.1"/>
</dbReference>
<dbReference type="SMR" id="Q8DJC4"/>
<dbReference type="STRING" id="197221.gene:10747900"/>
<dbReference type="EnsemblBacteria" id="BAC08855">
    <property type="protein sequence ID" value="BAC08855"/>
    <property type="gene ID" value="BAC08855"/>
</dbReference>
<dbReference type="KEGG" id="tel:tlr1303"/>
<dbReference type="PATRIC" id="fig|197221.4.peg.1371"/>
<dbReference type="eggNOG" id="COG0335">
    <property type="taxonomic scope" value="Bacteria"/>
</dbReference>
<dbReference type="Proteomes" id="UP000000440">
    <property type="component" value="Chromosome"/>
</dbReference>
<dbReference type="GO" id="GO:0022625">
    <property type="term" value="C:cytosolic large ribosomal subunit"/>
    <property type="evidence" value="ECO:0007669"/>
    <property type="project" value="TreeGrafter"/>
</dbReference>
<dbReference type="GO" id="GO:0003735">
    <property type="term" value="F:structural constituent of ribosome"/>
    <property type="evidence" value="ECO:0007669"/>
    <property type="project" value="InterPro"/>
</dbReference>
<dbReference type="GO" id="GO:0006412">
    <property type="term" value="P:translation"/>
    <property type="evidence" value="ECO:0007669"/>
    <property type="project" value="UniProtKB-UniRule"/>
</dbReference>
<dbReference type="FunFam" id="2.30.30.790:FF:000001">
    <property type="entry name" value="50S ribosomal protein L19"/>
    <property type="match status" value="1"/>
</dbReference>
<dbReference type="Gene3D" id="2.30.30.790">
    <property type="match status" value="1"/>
</dbReference>
<dbReference type="HAMAP" id="MF_00402">
    <property type="entry name" value="Ribosomal_bL19"/>
    <property type="match status" value="1"/>
</dbReference>
<dbReference type="InterPro" id="IPR001857">
    <property type="entry name" value="Ribosomal_bL19"/>
</dbReference>
<dbReference type="InterPro" id="IPR018257">
    <property type="entry name" value="Ribosomal_bL19_CS"/>
</dbReference>
<dbReference type="InterPro" id="IPR038657">
    <property type="entry name" value="Ribosomal_bL19_sf"/>
</dbReference>
<dbReference type="InterPro" id="IPR008991">
    <property type="entry name" value="Translation_prot_SH3-like_sf"/>
</dbReference>
<dbReference type="NCBIfam" id="TIGR01024">
    <property type="entry name" value="rplS_bact"/>
    <property type="match status" value="1"/>
</dbReference>
<dbReference type="PANTHER" id="PTHR15680:SF9">
    <property type="entry name" value="LARGE RIBOSOMAL SUBUNIT PROTEIN BL19M"/>
    <property type="match status" value="1"/>
</dbReference>
<dbReference type="PANTHER" id="PTHR15680">
    <property type="entry name" value="RIBOSOMAL PROTEIN L19"/>
    <property type="match status" value="1"/>
</dbReference>
<dbReference type="Pfam" id="PF01245">
    <property type="entry name" value="Ribosomal_L19"/>
    <property type="match status" value="1"/>
</dbReference>
<dbReference type="PIRSF" id="PIRSF002191">
    <property type="entry name" value="Ribosomal_L19"/>
    <property type="match status" value="1"/>
</dbReference>
<dbReference type="PRINTS" id="PR00061">
    <property type="entry name" value="RIBOSOMALL19"/>
</dbReference>
<dbReference type="SUPFAM" id="SSF50104">
    <property type="entry name" value="Translation proteins SH3-like domain"/>
    <property type="match status" value="1"/>
</dbReference>
<dbReference type="PROSITE" id="PS01015">
    <property type="entry name" value="RIBOSOMAL_L19"/>
    <property type="match status" value="1"/>
</dbReference>
<keyword id="KW-1185">Reference proteome</keyword>
<keyword id="KW-0687">Ribonucleoprotein</keyword>
<keyword id="KW-0689">Ribosomal protein</keyword>
<accession>Q8DJC4</accession>
<organism>
    <name type="scientific">Thermosynechococcus vestitus (strain NIES-2133 / IAM M-273 / BP-1)</name>
    <dbReference type="NCBI Taxonomy" id="197221"/>
    <lineage>
        <taxon>Bacteria</taxon>
        <taxon>Bacillati</taxon>
        <taxon>Cyanobacteriota</taxon>
        <taxon>Cyanophyceae</taxon>
        <taxon>Acaryochloridales</taxon>
        <taxon>Thermosynechococcaceae</taxon>
        <taxon>Thermosynechococcus</taxon>
    </lineage>
</organism>
<gene>
    <name evidence="1" type="primary">rplS</name>
    <name evidence="1" type="synonym">rpl19</name>
    <name type="ordered locus">tlr1303</name>
</gene>
<reference key="1">
    <citation type="journal article" date="2002" name="DNA Res.">
        <title>Complete genome structure of the thermophilic cyanobacterium Thermosynechococcus elongatus BP-1.</title>
        <authorList>
            <person name="Nakamura Y."/>
            <person name="Kaneko T."/>
            <person name="Sato S."/>
            <person name="Ikeuchi M."/>
            <person name="Katoh H."/>
            <person name="Sasamoto S."/>
            <person name="Watanabe A."/>
            <person name="Iriguchi M."/>
            <person name="Kawashima K."/>
            <person name="Kimura T."/>
            <person name="Kishida Y."/>
            <person name="Kiyokawa C."/>
            <person name="Kohara M."/>
            <person name="Matsumoto M."/>
            <person name="Matsuno A."/>
            <person name="Nakazaki N."/>
            <person name="Shimpo S."/>
            <person name="Sugimoto M."/>
            <person name="Takeuchi C."/>
            <person name="Yamada M."/>
            <person name="Tabata S."/>
        </authorList>
    </citation>
    <scope>NUCLEOTIDE SEQUENCE [LARGE SCALE GENOMIC DNA]</scope>
    <source>
        <strain>NIES-2133 / IAM M-273 / BP-1</strain>
    </source>
</reference>
<proteinExistence type="inferred from homology"/>
<evidence type="ECO:0000255" key="1">
    <source>
        <dbReference type="HAMAP-Rule" id="MF_00402"/>
    </source>
</evidence>
<evidence type="ECO:0000305" key="2"/>
<feature type="chain" id="PRO_0000163552" description="Large ribosomal subunit protein bL19">
    <location>
        <begin position="1"/>
        <end position="120"/>
    </location>
</feature>
<comment type="function">
    <text evidence="1">This protein is located at the 30S-50S ribosomal subunit interface and may play a role in the structure and function of the aminoacyl-tRNA binding site.</text>
</comment>
<comment type="similarity">
    <text evidence="1">Belongs to the bacterial ribosomal protein bL19 family.</text>
</comment>
<name>RL19_THEVB</name>
<sequence>MNAQDIIRSIEAEQMKTDLPVIYVGDRVRVGVKIKEGDKERVQPYEGDVIAMRNTGINRTITVRRVFQGVGVERVFLLHSPRIDSIKVIQRGKVRRAKLYYLRDRMGKASRIKPRFDRPL</sequence>